<organism>
    <name type="scientific">Schizosaccharomyces pombe (strain 972 / ATCC 24843)</name>
    <name type="common">Fission yeast</name>
    <dbReference type="NCBI Taxonomy" id="284812"/>
    <lineage>
        <taxon>Eukaryota</taxon>
        <taxon>Fungi</taxon>
        <taxon>Dikarya</taxon>
        <taxon>Ascomycota</taxon>
        <taxon>Taphrinomycotina</taxon>
        <taxon>Schizosaccharomycetes</taxon>
        <taxon>Schizosaccharomycetales</taxon>
        <taxon>Schizosaccharomycetaceae</taxon>
        <taxon>Schizosaccharomyces</taxon>
    </lineage>
</organism>
<gene>
    <name type="primary">frg1</name>
    <name type="ORF">SPBP23A10.12</name>
</gene>
<reference key="1">
    <citation type="journal article" date="2002" name="Nature">
        <title>The genome sequence of Schizosaccharomyces pombe.</title>
        <authorList>
            <person name="Wood V."/>
            <person name="Gwilliam R."/>
            <person name="Rajandream M.A."/>
            <person name="Lyne M.H."/>
            <person name="Lyne R."/>
            <person name="Stewart A."/>
            <person name="Sgouros J.G."/>
            <person name="Peat N."/>
            <person name="Hayles J."/>
            <person name="Baker S.G."/>
            <person name="Basham D."/>
            <person name="Bowman S."/>
            <person name="Brooks K."/>
            <person name="Brown D."/>
            <person name="Brown S."/>
            <person name="Chillingworth T."/>
            <person name="Churcher C.M."/>
            <person name="Collins M."/>
            <person name="Connor R."/>
            <person name="Cronin A."/>
            <person name="Davis P."/>
            <person name="Feltwell T."/>
            <person name="Fraser A."/>
            <person name="Gentles S."/>
            <person name="Goble A."/>
            <person name="Hamlin N."/>
            <person name="Harris D.E."/>
            <person name="Hidalgo J."/>
            <person name="Hodgson G."/>
            <person name="Holroyd S."/>
            <person name="Hornsby T."/>
            <person name="Howarth S."/>
            <person name="Huckle E.J."/>
            <person name="Hunt S."/>
            <person name="Jagels K."/>
            <person name="James K.D."/>
            <person name="Jones L."/>
            <person name="Jones M."/>
            <person name="Leather S."/>
            <person name="McDonald S."/>
            <person name="McLean J."/>
            <person name="Mooney P."/>
            <person name="Moule S."/>
            <person name="Mungall K.L."/>
            <person name="Murphy L.D."/>
            <person name="Niblett D."/>
            <person name="Odell C."/>
            <person name="Oliver K."/>
            <person name="O'Neil S."/>
            <person name="Pearson D."/>
            <person name="Quail M.A."/>
            <person name="Rabbinowitsch E."/>
            <person name="Rutherford K.M."/>
            <person name="Rutter S."/>
            <person name="Saunders D."/>
            <person name="Seeger K."/>
            <person name="Sharp S."/>
            <person name="Skelton J."/>
            <person name="Simmonds M.N."/>
            <person name="Squares R."/>
            <person name="Squares S."/>
            <person name="Stevens K."/>
            <person name="Taylor K."/>
            <person name="Taylor R.G."/>
            <person name="Tivey A."/>
            <person name="Walsh S.V."/>
            <person name="Warren T."/>
            <person name="Whitehead S."/>
            <person name="Woodward J.R."/>
            <person name="Volckaert G."/>
            <person name="Aert R."/>
            <person name="Robben J."/>
            <person name="Grymonprez B."/>
            <person name="Weltjens I."/>
            <person name="Vanstreels E."/>
            <person name="Rieger M."/>
            <person name="Schaefer M."/>
            <person name="Mueller-Auer S."/>
            <person name="Gabel C."/>
            <person name="Fuchs M."/>
            <person name="Duesterhoeft A."/>
            <person name="Fritzc C."/>
            <person name="Holzer E."/>
            <person name="Moestl D."/>
            <person name="Hilbert H."/>
            <person name="Borzym K."/>
            <person name="Langer I."/>
            <person name="Beck A."/>
            <person name="Lehrach H."/>
            <person name="Reinhardt R."/>
            <person name="Pohl T.M."/>
            <person name="Eger P."/>
            <person name="Zimmermann W."/>
            <person name="Wedler H."/>
            <person name="Wambutt R."/>
            <person name="Purnelle B."/>
            <person name="Goffeau A."/>
            <person name="Cadieu E."/>
            <person name="Dreano S."/>
            <person name="Gloux S."/>
            <person name="Lelaure V."/>
            <person name="Mottier S."/>
            <person name="Galibert F."/>
            <person name="Aves S.J."/>
            <person name="Xiang Z."/>
            <person name="Hunt C."/>
            <person name="Moore K."/>
            <person name="Hurst S.M."/>
            <person name="Lucas M."/>
            <person name="Rochet M."/>
            <person name="Gaillardin C."/>
            <person name="Tallada V.A."/>
            <person name="Garzon A."/>
            <person name="Thode G."/>
            <person name="Daga R.R."/>
            <person name="Cruzado L."/>
            <person name="Jimenez J."/>
            <person name="Sanchez M."/>
            <person name="del Rey F."/>
            <person name="Benito J."/>
            <person name="Dominguez A."/>
            <person name="Revuelta J.L."/>
            <person name="Moreno S."/>
            <person name="Armstrong J."/>
            <person name="Forsburg S.L."/>
            <person name="Cerutti L."/>
            <person name="Lowe T."/>
            <person name="McCombie W.R."/>
            <person name="Paulsen I."/>
            <person name="Potashkin J."/>
            <person name="Shpakovski G.V."/>
            <person name="Ussery D."/>
            <person name="Barrell B.G."/>
            <person name="Nurse P."/>
        </authorList>
    </citation>
    <scope>NUCLEOTIDE SEQUENCE [LARGE SCALE GENOMIC DNA]</scope>
    <source>
        <strain>972 / ATCC 24843</strain>
    </source>
</reference>
<reference key="2">
    <citation type="journal article" date="2006" name="Nat. Biotechnol.">
        <title>ORFeome cloning and global analysis of protein localization in the fission yeast Schizosaccharomyces pombe.</title>
        <authorList>
            <person name="Matsuyama A."/>
            <person name="Arai R."/>
            <person name="Yashiroda Y."/>
            <person name="Shirai A."/>
            <person name="Kamata A."/>
            <person name="Sekido S."/>
            <person name="Kobayashi Y."/>
            <person name="Hashimoto A."/>
            <person name="Hamamoto M."/>
            <person name="Hiraoka Y."/>
            <person name="Horinouchi S."/>
            <person name="Yoshida M."/>
        </authorList>
    </citation>
    <scope>SUBCELLULAR LOCATION [LARGE SCALE ANALYSIS]</scope>
</reference>
<reference key="3">
    <citation type="journal article" date="2011" name="PLoS ONE">
        <title>Systematic two-hybrid and comparative proteomic analyses reveal novel yeast pre-mRNA splicing factors connected to Prp19.</title>
        <authorList>
            <person name="Ren L."/>
            <person name="McLean J.R."/>
            <person name="Hazbun T.R."/>
            <person name="Fields S."/>
            <person name="Vander Kooi C."/>
            <person name="Ohi M.D."/>
            <person name="Gould K.L."/>
        </authorList>
    </citation>
    <scope>IDENTIFICATION IN THE SPLICEOSOME</scope>
</reference>
<accession>Q9P7X3</accession>
<feature type="chain" id="PRO_0000220773" description="Protein frg1">
    <location>
        <begin position="1"/>
        <end position="245"/>
    </location>
</feature>
<feature type="region of interest" description="Disordered" evidence="2">
    <location>
        <begin position="1"/>
        <end position="32"/>
    </location>
</feature>
<dbReference type="EMBL" id="CU329671">
    <property type="protein sequence ID" value="CAB66440.1"/>
    <property type="molecule type" value="Genomic_DNA"/>
</dbReference>
<dbReference type="PIR" id="T50399">
    <property type="entry name" value="T50399"/>
</dbReference>
<dbReference type="RefSeq" id="NP_595824.1">
    <property type="nucleotide sequence ID" value="NM_001021728.2"/>
</dbReference>
<dbReference type="SMR" id="Q9P7X3"/>
<dbReference type="BioGRID" id="277840">
    <property type="interactions" value="2"/>
</dbReference>
<dbReference type="FunCoup" id="Q9P7X3">
    <property type="interactions" value="465"/>
</dbReference>
<dbReference type="STRING" id="284812.Q9P7X3"/>
<dbReference type="iPTMnet" id="Q9P7X3"/>
<dbReference type="PaxDb" id="4896-SPBP23A10.12.1"/>
<dbReference type="EnsemblFungi" id="SPBP23A10.12.1">
    <property type="protein sequence ID" value="SPBP23A10.12.1:pep"/>
    <property type="gene ID" value="SPBP23A10.12"/>
</dbReference>
<dbReference type="GeneID" id="2541328"/>
<dbReference type="KEGG" id="spo:2541328"/>
<dbReference type="PomBase" id="SPBP23A10.12">
    <property type="gene designation" value="frg1"/>
</dbReference>
<dbReference type="VEuPathDB" id="FungiDB:SPBP23A10.12"/>
<dbReference type="eggNOG" id="KOG3962">
    <property type="taxonomic scope" value="Eukaryota"/>
</dbReference>
<dbReference type="HOGENOM" id="CLU_1134130_0_0_1"/>
<dbReference type="InParanoid" id="Q9P7X3"/>
<dbReference type="OMA" id="EPDNTRQ"/>
<dbReference type="PhylomeDB" id="Q9P7X3"/>
<dbReference type="PRO" id="PR:Q9P7X3"/>
<dbReference type="Proteomes" id="UP000002485">
    <property type="component" value="Chromosome II"/>
</dbReference>
<dbReference type="GO" id="GO:0071013">
    <property type="term" value="C:catalytic step 2 spliceosome"/>
    <property type="evidence" value="ECO:0000318"/>
    <property type="project" value="GO_Central"/>
</dbReference>
<dbReference type="GO" id="GO:0005730">
    <property type="term" value="C:nucleolus"/>
    <property type="evidence" value="ECO:0007005"/>
    <property type="project" value="PomBase"/>
</dbReference>
<dbReference type="GO" id="GO:0005634">
    <property type="term" value="C:nucleus"/>
    <property type="evidence" value="ECO:0007005"/>
    <property type="project" value="PomBase"/>
</dbReference>
<dbReference type="GO" id="GO:0051015">
    <property type="term" value="F:actin filament binding"/>
    <property type="evidence" value="ECO:0000318"/>
    <property type="project" value="GO_Central"/>
</dbReference>
<dbReference type="GO" id="GO:0045292">
    <property type="term" value="P:mRNA cis splicing, via spliceosome"/>
    <property type="evidence" value="ECO:0000250"/>
    <property type="project" value="PomBase"/>
</dbReference>
<dbReference type="CDD" id="cd23339">
    <property type="entry name" value="beta-trefoil_FSCN_fungal_FRG1-like"/>
    <property type="match status" value="1"/>
</dbReference>
<dbReference type="Gene3D" id="2.80.10.50">
    <property type="match status" value="1"/>
</dbReference>
<dbReference type="InterPro" id="IPR008999">
    <property type="entry name" value="Actin-crosslinking"/>
</dbReference>
<dbReference type="InterPro" id="IPR010414">
    <property type="entry name" value="FRG1"/>
</dbReference>
<dbReference type="PANTHER" id="PTHR12928">
    <property type="entry name" value="FRG1 PROTEIN"/>
    <property type="match status" value="1"/>
</dbReference>
<dbReference type="PANTHER" id="PTHR12928:SF0">
    <property type="entry name" value="FSHD REGION GENE 1"/>
    <property type="match status" value="1"/>
</dbReference>
<dbReference type="Pfam" id="PF06229">
    <property type="entry name" value="FRG1"/>
    <property type="match status" value="1"/>
</dbReference>
<dbReference type="SUPFAM" id="SSF50405">
    <property type="entry name" value="Actin-crosslinking proteins"/>
    <property type="match status" value="1"/>
</dbReference>
<protein>
    <recommendedName>
        <fullName>Protein frg1</fullName>
    </recommendedName>
</protein>
<proteinExistence type="inferred from homology"/>
<name>FRG1_SCHPO</name>
<sequence>MSMRLTFKGDKKIQKKKKKNTKSLQSSLESAENDPFWTDANELNELEGPAVIYKIDDDAGVSLGIEEVKESCVLLPLDKVSLEPELTRQVFLLSILNNTILLKSCLGKYMSCSKSGDLYCTQEAVGSQEQWIAENLGSGFWAWKSVSTKKYLTLSREKQDQAIACVSDTVIPEAKWRIRVQTRFLKKNKSSLFDNPTIHSRQLESMAGRKLSTDEKKTLKKAFKEGVLHEALLDLRVSSRSDKYG</sequence>
<evidence type="ECO:0000250" key="1"/>
<evidence type="ECO:0000256" key="2">
    <source>
        <dbReference type="SAM" id="MobiDB-lite"/>
    </source>
</evidence>
<evidence type="ECO:0000269" key="3">
    <source>
    </source>
</evidence>
<evidence type="ECO:0000269" key="4">
    <source>
    </source>
</evidence>
<evidence type="ECO:0000305" key="5"/>
<comment type="function">
    <text evidence="1">May have a role in processing of pre-rRNA or in the assembly of rRNA into ribosomal subunits. May be involved in pre-mRNA splicing (By similarity).</text>
</comment>
<comment type="subunit">
    <text evidence="4">Component of the spliceosome.</text>
</comment>
<comment type="subcellular location">
    <subcellularLocation>
        <location evidence="3">Nucleus</location>
        <location evidence="3">Nucleolus</location>
    </subcellularLocation>
</comment>
<comment type="similarity">
    <text evidence="5">Belongs to the FRG1 family.</text>
</comment>
<keyword id="KW-0507">mRNA processing</keyword>
<keyword id="KW-0508">mRNA splicing</keyword>
<keyword id="KW-0539">Nucleus</keyword>
<keyword id="KW-1185">Reference proteome</keyword>
<keyword id="KW-0747">Spliceosome</keyword>